<feature type="chain" id="PRO_1000003759" description="Nucleoid-associated protein LSL_1227">
    <location>
        <begin position="1"/>
        <end position="104"/>
    </location>
</feature>
<feature type="region of interest" description="Disordered" evidence="2">
    <location>
        <begin position="1"/>
        <end position="24"/>
    </location>
</feature>
<feature type="compositionally biased region" description="Low complexity" evidence="2">
    <location>
        <begin position="1"/>
        <end position="19"/>
    </location>
</feature>
<name>Y1227_LIGS1</name>
<sequence>MMMRGMNMQSMMKQMQKLQKNMKKDQDELNATVFEGHAADDAVVVKFTGDHKMTDISIKEEAIDPDDVDMLQDLVLMAVNDAMSKIDKQTQETMGKYSRNIPGL</sequence>
<evidence type="ECO:0000255" key="1">
    <source>
        <dbReference type="HAMAP-Rule" id="MF_00274"/>
    </source>
</evidence>
<evidence type="ECO:0000256" key="2">
    <source>
        <dbReference type="SAM" id="MobiDB-lite"/>
    </source>
</evidence>
<accession>Q1WSU4</accession>
<gene>
    <name type="ordered locus">LSL_1227</name>
</gene>
<organism>
    <name type="scientific">Ligilactobacillus salivarius (strain UCC118)</name>
    <name type="common">Lactobacillus salivarius</name>
    <dbReference type="NCBI Taxonomy" id="362948"/>
    <lineage>
        <taxon>Bacteria</taxon>
        <taxon>Bacillati</taxon>
        <taxon>Bacillota</taxon>
        <taxon>Bacilli</taxon>
        <taxon>Lactobacillales</taxon>
        <taxon>Lactobacillaceae</taxon>
        <taxon>Ligilactobacillus</taxon>
    </lineage>
</organism>
<protein>
    <recommendedName>
        <fullName evidence="1">Nucleoid-associated protein LSL_1227</fullName>
    </recommendedName>
</protein>
<keyword id="KW-0963">Cytoplasm</keyword>
<keyword id="KW-0238">DNA-binding</keyword>
<keyword id="KW-1185">Reference proteome</keyword>
<reference key="1">
    <citation type="journal article" date="2006" name="Proc. Natl. Acad. Sci. U.S.A.">
        <title>Multireplicon genome architecture of Lactobacillus salivarius.</title>
        <authorList>
            <person name="Claesson M.J."/>
            <person name="Li Y."/>
            <person name="Leahy S."/>
            <person name="Canchaya C."/>
            <person name="van Pijkeren J.P."/>
            <person name="Cerdeno-Tarraga A.M."/>
            <person name="Parkhill J."/>
            <person name="Flynn S."/>
            <person name="O'Sullivan G.C."/>
            <person name="Collins J.K."/>
            <person name="Higgins D."/>
            <person name="Shanahan F."/>
            <person name="Fitzgerald G.F."/>
            <person name="van Sinderen D."/>
            <person name="O'Toole P.W."/>
        </authorList>
    </citation>
    <scope>NUCLEOTIDE SEQUENCE [LARGE SCALE GENOMIC DNA]</scope>
    <source>
        <strain>UCC118</strain>
    </source>
</reference>
<proteinExistence type="inferred from homology"/>
<dbReference type="EMBL" id="CP000233">
    <property type="protein sequence ID" value="ABE00035.1"/>
    <property type="molecule type" value="Genomic_DNA"/>
</dbReference>
<dbReference type="RefSeq" id="WP_003700666.1">
    <property type="nucleotide sequence ID" value="NC_007929.1"/>
</dbReference>
<dbReference type="RefSeq" id="YP_536118.1">
    <property type="nucleotide sequence ID" value="NC_007929.1"/>
</dbReference>
<dbReference type="SMR" id="Q1WSU4"/>
<dbReference type="STRING" id="362948.LSL_1227"/>
<dbReference type="KEGG" id="lsl:LSL_1227"/>
<dbReference type="PATRIC" id="fig|362948.14.peg.1301"/>
<dbReference type="HOGENOM" id="CLU_140930_1_1_9"/>
<dbReference type="OrthoDB" id="9795263at2"/>
<dbReference type="Proteomes" id="UP000006559">
    <property type="component" value="Chromosome"/>
</dbReference>
<dbReference type="GO" id="GO:0043590">
    <property type="term" value="C:bacterial nucleoid"/>
    <property type="evidence" value="ECO:0007669"/>
    <property type="project" value="UniProtKB-UniRule"/>
</dbReference>
<dbReference type="GO" id="GO:0005829">
    <property type="term" value="C:cytosol"/>
    <property type="evidence" value="ECO:0007669"/>
    <property type="project" value="TreeGrafter"/>
</dbReference>
<dbReference type="GO" id="GO:0003677">
    <property type="term" value="F:DNA binding"/>
    <property type="evidence" value="ECO:0007669"/>
    <property type="project" value="UniProtKB-UniRule"/>
</dbReference>
<dbReference type="Gene3D" id="3.30.1310.10">
    <property type="entry name" value="Nucleoid-associated protein YbaB-like domain"/>
    <property type="match status" value="1"/>
</dbReference>
<dbReference type="HAMAP" id="MF_00274">
    <property type="entry name" value="DNA_YbaB_EbfC"/>
    <property type="match status" value="1"/>
</dbReference>
<dbReference type="InterPro" id="IPR036894">
    <property type="entry name" value="YbaB-like_sf"/>
</dbReference>
<dbReference type="InterPro" id="IPR004401">
    <property type="entry name" value="YbaB/EbfC"/>
</dbReference>
<dbReference type="NCBIfam" id="TIGR00103">
    <property type="entry name" value="DNA_YbaB_EbfC"/>
    <property type="match status" value="1"/>
</dbReference>
<dbReference type="PANTHER" id="PTHR33449">
    <property type="entry name" value="NUCLEOID-ASSOCIATED PROTEIN YBAB"/>
    <property type="match status" value="1"/>
</dbReference>
<dbReference type="PANTHER" id="PTHR33449:SF1">
    <property type="entry name" value="NUCLEOID-ASSOCIATED PROTEIN YBAB"/>
    <property type="match status" value="1"/>
</dbReference>
<dbReference type="Pfam" id="PF02575">
    <property type="entry name" value="YbaB_DNA_bd"/>
    <property type="match status" value="1"/>
</dbReference>
<dbReference type="PIRSF" id="PIRSF004555">
    <property type="entry name" value="UCP004555"/>
    <property type="match status" value="1"/>
</dbReference>
<dbReference type="SUPFAM" id="SSF82607">
    <property type="entry name" value="YbaB-like"/>
    <property type="match status" value="1"/>
</dbReference>
<comment type="function">
    <text evidence="1">Binds to DNA and alters its conformation. May be involved in regulation of gene expression, nucleoid organization and DNA protection.</text>
</comment>
<comment type="subunit">
    <text evidence="1">Homodimer.</text>
</comment>
<comment type="subcellular location">
    <subcellularLocation>
        <location evidence="1">Cytoplasm</location>
        <location evidence="1">Nucleoid</location>
    </subcellularLocation>
</comment>
<comment type="similarity">
    <text evidence="1">Belongs to the YbaB/EbfC family.</text>
</comment>